<proteinExistence type="inferred from homology"/>
<sequence length="84" mass="9682">MNLFDFFRGRQKQTSASVAKERLQIIVAHERGQRSEPDYLPALQKELLEVIRKYVNIGSDDVHIELENQGSCSILELNITLPDR</sequence>
<protein>
    <recommendedName>
        <fullName evidence="1">Cell division topological specificity factor</fullName>
    </recommendedName>
</protein>
<keyword id="KW-0131">Cell cycle</keyword>
<keyword id="KW-0132">Cell division</keyword>
<accession>B1J1S5</accession>
<comment type="function">
    <text evidence="1">Prevents the cell division inhibition by proteins MinC and MinD at internal division sites while permitting inhibition at polar sites. This ensures cell division at the proper site by restricting the formation of a division septum at the midpoint of the long axis of the cell.</text>
</comment>
<comment type="similarity">
    <text evidence="1">Belongs to the MinE family.</text>
</comment>
<feature type="chain" id="PRO_1000114234" description="Cell division topological specificity factor">
    <location>
        <begin position="1"/>
        <end position="84"/>
    </location>
</feature>
<gene>
    <name evidence="1" type="primary">minE</name>
    <name type="ordered locus">PputW619_1282</name>
</gene>
<reference key="1">
    <citation type="submission" date="2008-02" db="EMBL/GenBank/DDBJ databases">
        <title>Complete sequence of Pseudomonas putida W619.</title>
        <authorList>
            <person name="Copeland A."/>
            <person name="Lucas S."/>
            <person name="Lapidus A."/>
            <person name="Barry K."/>
            <person name="Detter J.C."/>
            <person name="Glavina del Rio T."/>
            <person name="Dalin E."/>
            <person name="Tice H."/>
            <person name="Pitluck S."/>
            <person name="Chain P."/>
            <person name="Malfatti S."/>
            <person name="Shin M."/>
            <person name="Vergez L."/>
            <person name="Schmutz J."/>
            <person name="Larimer F."/>
            <person name="Land M."/>
            <person name="Hauser L."/>
            <person name="Kyrpides N."/>
            <person name="Kim E."/>
            <person name="Taghavi S."/>
            <person name="Vangronsveld D."/>
            <person name="van der Lelie D."/>
            <person name="Richardson P."/>
        </authorList>
    </citation>
    <scope>NUCLEOTIDE SEQUENCE [LARGE SCALE GENOMIC DNA]</scope>
    <source>
        <strain>W619</strain>
    </source>
</reference>
<dbReference type="EMBL" id="CP000949">
    <property type="protein sequence ID" value="ACA71787.1"/>
    <property type="molecule type" value="Genomic_DNA"/>
</dbReference>
<dbReference type="SMR" id="B1J1S5"/>
<dbReference type="STRING" id="390235.PputW619_1282"/>
<dbReference type="KEGG" id="ppw:PputW619_1282"/>
<dbReference type="eggNOG" id="COG0851">
    <property type="taxonomic scope" value="Bacteria"/>
</dbReference>
<dbReference type="HOGENOM" id="CLU_137929_2_1_6"/>
<dbReference type="OrthoDB" id="9802655at2"/>
<dbReference type="GO" id="GO:0051301">
    <property type="term" value="P:cell division"/>
    <property type="evidence" value="ECO:0007669"/>
    <property type="project" value="UniProtKB-KW"/>
</dbReference>
<dbReference type="GO" id="GO:0032955">
    <property type="term" value="P:regulation of division septum assembly"/>
    <property type="evidence" value="ECO:0007669"/>
    <property type="project" value="InterPro"/>
</dbReference>
<dbReference type="FunFam" id="3.30.1070.10:FF:000001">
    <property type="entry name" value="Cell division topological specificity factor"/>
    <property type="match status" value="1"/>
</dbReference>
<dbReference type="Gene3D" id="3.30.1070.10">
    <property type="entry name" value="Cell division topological specificity factor MinE"/>
    <property type="match status" value="1"/>
</dbReference>
<dbReference type="HAMAP" id="MF_00262">
    <property type="entry name" value="MinE"/>
    <property type="match status" value="1"/>
</dbReference>
<dbReference type="InterPro" id="IPR005527">
    <property type="entry name" value="MinE"/>
</dbReference>
<dbReference type="InterPro" id="IPR036707">
    <property type="entry name" value="MinE_sf"/>
</dbReference>
<dbReference type="NCBIfam" id="TIGR01215">
    <property type="entry name" value="minE"/>
    <property type="match status" value="1"/>
</dbReference>
<dbReference type="NCBIfam" id="NF001422">
    <property type="entry name" value="PRK00296.1"/>
    <property type="match status" value="1"/>
</dbReference>
<dbReference type="NCBIfam" id="NF010595">
    <property type="entry name" value="PRK13989.1"/>
    <property type="match status" value="1"/>
</dbReference>
<dbReference type="Pfam" id="PF03776">
    <property type="entry name" value="MinE"/>
    <property type="match status" value="1"/>
</dbReference>
<dbReference type="SUPFAM" id="SSF55229">
    <property type="entry name" value="Cell division protein MinE topological specificity domain"/>
    <property type="match status" value="1"/>
</dbReference>
<organism>
    <name type="scientific">Pseudomonas putida (strain W619)</name>
    <dbReference type="NCBI Taxonomy" id="390235"/>
    <lineage>
        <taxon>Bacteria</taxon>
        <taxon>Pseudomonadati</taxon>
        <taxon>Pseudomonadota</taxon>
        <taxon>Gammaproteobacteria</taxon>
        <taxon>Pseudomonadales</taxon>
        <taxon>Pseudomonadaceae</taxon>
        <taxon>Pseudomonas</taxon>
    </lineage>
</organism>
<evidence type="ECO:0000255" key="1">
    <source>
        <dbReference type="HAMAP-Rule" id="MF_00262"/>
    </source>
</evidence>
<name>MINE_PSEPW</name>